<dbReference type="EMBL" id="U00096">
    <property type="protein sequence ID" value="AAC75332.1"/>
    <property type="molecule type" value="Genomic_DNA"/>
</dbReference>
<dbReference type="EMBL" id="AP009048">
    <property type="protein sequence ID" value="BAE76680.1"/>
    <property type="molecule type" value="Genomic_DNA"/>
</dbReference>
<dbReference type="PIR" id="F64998">
    <property type="entry name" value="F64998"/>
</dbReference>
<dbReference type="RefSeq" id="NP_416775.1">
    <property type="nucleotide sequence ID" value="NC_000913.3"/>
</dbReference>
<dbReference type="RefSeq" id="WP_000525360.1">
    <property type="nucleotide sequence ID" value="NZ_LN832404.1"/>
</dbReference>
<dbReference type="PDB" id="1RYL">
    <property type="method" value="X-ray"/>
    <property type="resolution" value="1.60 A"/>
    <property type="chains" value="A/B=1-167"/>
</dbReference>
<dbReference type="PDBsum" id="1RYL"/>
<dbReference type="SMR" id="P76483"/>
<dbReference type="BioGRID" id="4260502">
    <property type="interactions" value="17"/>
</dbReference>
<dbReference type="BioGRID" id="851086">
    <property type="interactions" value="1"/>
</dbReference>
<dbReference type="FunCoup" id="P76483">
    <property type="interactions" value="14"/>
</dbReference>
<dbReference type="IntAct" id="P76483">
    <property type="interactions" value="5"/>
</dbReference>
<dbReference type="STRING" id="511145.b2272"/>
<dbReference type="jPOST" id="P76483"/>
<dbReference type="PaxDb" id="511145-b2272"/>
<dbReference type="EnsemblBacteria" id="AAC75332">
    <property type="protein sequence ID" value="AAC75332"/>
    <property type="gene ID" value="b2272"/>
</dbReference>
<dbReference type="GeneID" id="946745"/>
<dbReference type="KEGG" id="ecj:JW2267"/>
<dbReference type="KEGG" id="eco:b2272"/>
<dbReference type="KEGG" id="ecoc:C3026_12685"/>
<dbReference type="PATRIC" id="fig|511145.12.peg.2365"/>
<dbReference type="EchoBASE" id="EB3850"/>
<dbReference type="eggNOG" id="ENOG502ZMYT">
    <property type="taxonomic scope" value="Bacteria"/>
</dbReference>
<dbReference type="HOGENOM" id="CLU_110577_2_1_6"/>
<dbReference type="InParanoid" id="P76483"/>
<dbReference type="OMA" id="NIWDYEE"/>
<dbReference type="OrthoDB" id="5354816at2"/>
<dbReference type="BioCyc" id="EcoCyc:G7179-MONOMER"/>
<dbReference type="EvolutionaryTrace" id="P76483"/>
<dbReference type="PRO" id="PR:P76483"/>
<dbReference type="Proteomes" id="UP000000625">
    <property type="component" value="Chromosome"/>
</dbReference>
<dbReference type="Gene3D" id="3.40.1760.10">
    <property type="entry name" value="YfbM-like super family"/>
    <property type="match status" value="1"/>
</dbReference>
<dbReference type="InterPro" id="IPR015068">
    <property type="entry name" value="DUF1877"/>
</dbReference>
<dbReference type="InterPro" id="IPR035944">
    <property type="entry name" value="YfbM-like_sf"/>
</dbReference>
<dbReference type="Pfam" id="PF08974">
    <property type="entry name" value="DUF1877"/>
    <property type="match status" value="1"/>
</dbReference>
<dbReference type="SUPFAM" id="SSF111069">
    <property type="entry name" value="Hypothetical protein yfbM"/>
    <property type="match status" value="1"/>
</dbReference>
<reference key="1">
    <citation type="journal article" date="1997" name="Science">
        <title>The complete genome sequence of Escherichia coli K-12.</title>
        <authorList>
            <person name="Blattner F.R."/>
            <person name="Plunkett G. III"/>
            <person name="Bloch C.A."/>
            <person name="Perna N.T."/>
            <person name="Burland V."/>
            <person name="Riley M."/>
            <person name="Collado-Vides J."/>
            <person name="Glasner J.D."/>
            <person name="Rode C.K."/>
            <person name="Mayhew G.F."/>
            <person name="Gregor J."/>
            <person name="Davis N.W."/>
            <person name="Kirkpatrick H.A."/>
            <person name="Goeden M.A."/>
            <person name="Rose D.J."/>
            <person name="Mau B."/>
            <person name="Shao Y."/>
        </authorList>
    </citation>
    <scope>NUCLEOTIDE SEQUENCE [LARGE SCALE GENOMIC DNA]</scope>
    <source>
        <strain>K12 / MG1655 / ATCC 47076</strain>
    </source>
</reference>
<reference key="2">
    <citation type="journal article" date="2006" name="Mol. Syst. Biol.">
        <title>Highly accurate genome sequences of Escherichia coli K-12 strains MG1655 and W3110.</title>
        <authorList>
            <person name="Hayashi K."/>
            <person name="Morooka N."/>
            <person name="Yamamoto Y."/>
            <person name="Fujita K."/>
            <person name="Isono K."/>
            <person name="Choi S."/>
            <person name="Ohtsubo E."/>
            <person name="Baba T."/>
            <person name="Wanner B.L."/>
            <person name="Mori H."/>
            <person name="Horiuchi T."/>
        </authorList>
    </citation>
    <scope>NUCLEOTIDE SEQUENCE [LARGE SCALE GENOMIC DNA]</scope>
    <source>
        <strain>K12 / W3110 / ATCC 27325 / DSM 5911</strain>
    </source>
</reference>
<reference key="3">
    <citation type="submission" date="2005-01" db="PDB data bank">
        <title>1.6A crystal structure of a hypothetical protein yfbM from E. coli.</title>
        <authorList>
            <consortium name="Midwest center for structural genomics (MCSG)"/>
        </authorList>
    </citation>
    <scope>X-RAY CRYSTALLOGRAPHY (1.6 ANGSTROMS)</scope>
    <scope>SUBUNIT</scope>
</reference>
<accession>P76483</accession>
<accession>Q2MAM6</accession>
<feature type="chain" id="PRO_0000169180" description="Protein YfbM">
    <location>
        <begin position="1"/>
        <end position="167"/>
    </location>
</feature>
<feature type="strand" evidence="2">
    <location>
        <begin position="4"/>
        <end position="10"/>
    </location>
</feature>
<feature type="helix" evidence="2">
    <location>
        <begin position="12"/>
        <end position="20"/>
    </location>
</feature>
<feature type="helix" evidence="2">
    <location>
        <begin position="30"/>
        <end position="33"/>
    </location>
</feature>
<feature type="strand" evidence="2">
    <location>
        <begin position="39"/>
        <end position="41"/>
    </location>
</feature>
<feature type="helix" evidence="2">
    <location>
        <begin position="46"/>
        <end position="54"/>
    </location>
</feature>
<feature type="helix" evidence="2">
    <location>
        <begin position="66"/>
        <end position="72"/>
    </location>
</feature>
<feature type="strand" evidence="2">
    <location>
        <begin position="74"/>
        <end position="78"/>
    </location>
</feature>
<feature type="strand" evidence="2">
    <location>
        <begin position="84"/>
        <end position="88"/>
    </location>
</feature>
<feature type="helix" evidence="2">
    <location>
        <begin position="90"/>
        <end position="102"/>
    </location>
</feature>
<feature type="helix" evidence="2">
    <location>
        <begin position="105"/>
        <end position="111"/>
    </location>
</feature>
<feature type="helix" evidence="2">
    <location>
        <begin position="114"/>
        <end position="119"/>
    </location>
</feature>
<feature type="helix" evidence="2">
    <location>
        <begin position="130"/>
        <end position="132"/>
    </location>
</feature>
<feature type="helix" evidence="2">
    <location>
        <begin position="133"/>
        <end position="156"/>
    </location>
</feature>
<feature type="strand" evidence="2">
    <location>
        <begin position="160"/>
        <end position="166"/>
    </location>
</feature>
<gene>
    <name type="primary">yfbM</name>
    <name type="ordered locus">b2272</name>
    <name type="ordered locus">JW2267</name>
</gene>
<protein>
    <recommendedName>
        <fullName>Protein YfbM</fullName>
    </recommendedName>
</protein>
<proteinExistence type="evidence at protein level"/>
<keyword id="KW-0002">3D-structure</keyword>
<keyword id="KW-1185">Reference proteome</keyword>
<sequence length="167" mass="19019">MGMIGYFAEIDSEKINQLLESTEKPLMDNIHDTLSGLRRLDIDKRWDFLHFGLTGTSAFDPAKNDPLSRAVLGEHSLEDGIDGFLGLTWNQELAATIDRLESLDRNELRKQFSIKRLNEMEIYPGVTFSEELEGQLFASIMLDMEKLISAYRRMLRQGNHALTVIVG</sequence>
<comment type="subunit">
    <text evidence="1">Monomer.</text>
</comment>
<evidence type="ECO:0000269" key="1">
    <source ref="3"/>
</evidence>
<evidence type="ECO:0007829" key="2">
    <source>
        <dbReference type="PDB" id="1RYL"/>
    </source>
</evidence>
<organism>
    <name type="scientific">Escherichia coli (strain K12)</name>
    <dbReference type="NCBI Taxonomy" id="83333"/>
    <lineage>
        <taxon>Bacteria</taxon>
        <taxon>Pseudomonadati</taxon>
        <taxon>Pseudomonadota</taxon>
        <taxon>Gammaproteobacteria</taxon>
        <taxon>Enterobacterales</taxon>
        <taxon>Enterobacteriaceae</taxon>
        <taxon>Escherichia</taxon>
    </lineage>
</organism>
<name>YFBM_ECOLI</name>